<accession>B3WAR1</accession>
<dbReference type="EC" id="2.7.8.7" evidence="1"/>
<dbReference type="EMBL" id="FM177140">
    <property type="protein sequence ID" value="CAQ67780.1"/>
    <property type="molecule type" value="Genomic_DNA"/>
</dbReference>
<dbReference type="SMR" id="B3WAR1"/>
<dbReference type="KEGG" id="lcb:LCABL_27290"/>
<dbReference type="HOGENOM" id="CLU_089696_1_2_9"/>
<dbReference type="GO" id="GO:0005737">
    <property type="term" value="C:cytoplasm"/>
    <property type="evidence" value="ECO:0007669"/>
    <property type="project" value="UniProtKB-SubCell"/>
</dbReference>
<dbReference type="GO" id="GO:0008897">
    <property type="term" value="F:holo-[acyl-carrier-protein] synthase activity"/>
    <property type="evidence" value="ECO:0007669"/>
    <property type="project" value="UniProtKB-UniRule"/>
</dbReference>
<dbReference type="GO" id="GO:0000287">
    <property type="term" value="F:magnesium ion binding"/>
    <property type="evidence" value="ECO:0007669"/>
    <property type="project" value="UniProtKB-UniRule"/>
</dbReference>
<dbReference type="GO" id="GO:0006633">
    <property type="term" value="P:fatty acid biosynthetic process"/>
    <property type="evidence" value="ECO:0007669"/>
    <property type="project" value="UniProtKB-UniRule"/>
</dbReference>
<dbReference type="Gene3D" id="3.90.470.20">
    <property type="entry name" value="4'-phosphopantetheinyl transferase domain"/>
    <property type="match status" value="1"/>
</dbReference>
<dbReference type="HAMAP" id="MF_00101">
    <property type="entry name" value="AcpS"/>
    <property type="match status" value="1"/>
</dbReference>
<dbReference type="InterPro" id="IPR008278">
    <property type="entry name" value="4-PPantetheinyl_Trfase_dom"/>
</dbReference>
<dbReference type="InterPro" id="IPR037143">
    <property type="entry name" value="4-PPantetheinyl_Trfase_dom_sf"/>
</dbReference>
<dbReference type="InterPro" id="IPR002582">
    <property type="entry name" value="ACPS"/>
</dbReference>
<dbReference type="InterPro" id="IPR004568">
    <property type="entry name" value="Ppantetheine-prot_Trfase_dom"/>
</dbReference>
<dbReference type="NCBIfam" id="TIGR00516">
    <property type="entry name" value="acpS"/>
    <property type="match status" value="1"/>
</dbReference>
<dbReference type="NCBIfam" id="TIGR00556">
    <property type="entry name" value="pantethn_trn"/>
    <property type="match status" value="1"/>
</dbReference>
<dbReference type="Pfam" id="PF01648">
    <property type="entry name" value="ACPS"/>
    <property type="match status" value="1"/>
</dbReference>
<dbReference type="SUPFAM" id="SSF56214">
    <property type="entry name" value="4'-phosphopantetheinyl transferase"/>
    <property type="match status" value="1"/>
</dbReference>
<name>ACPS_LACCB</name>
<keyword id="KW-0963">Cytoplasm</keyword>
<keyword id="KW-0275">Fatty acid biosynthesis</keyword>
<keyword id="KW-0276">Fatty acid metabolism</keyword>
<keyword id="KW-0444">Lipid biosynthesis</keyword>
<keyword id="KW-0443">Lipid metabolism</keyword>
<keyword id="KW-0460">Magnesium</keyword>
<keyword id="KW-0479">Metal-binding</keyword>
<keyword id="KW-0808">Transferase</keyword>
<feature type="chain" id="PRO_1000093886" description="Holo-[acyl-carrier-protein] synthase">
    <location>
        <begin position="1"/>
        <end position="124"/>
    </location>
</feature>
<feature type="binding site" evidence="1">
    <location>
        <position position="8"/>
    </location>
    <ligand>
        <name>Mg(2+)</name>
        <dbReference type="ChEBI" id="CHEBI:18420"/>
    </ligand>
</feature>
<feature type="binding site" evidence="1">
    <location>
        <position position="58"/>
    </location>
    <ligand>
        <name>Mg(2+)</name>
        <dbReference type="ChEBI" id="CHEBI:18420"/>
    </ligand>
</feature>
<organism>
    <name type="scientific">Lacticaseibacillus casei (strain BL23)</name>
    <name type="common">Lactobacillus casei</name>
    <dbReference type="NCBI Taxonomy" id="543734"/>
    <lineage>
        <taxon>Bacteria</taxon>
        <taxon>Bacillati</taxon>
        <taxon>Bacillota</taxon>
        <taxon>Bacilli</taxon>
        <taxon>Lactobacillales</taxon>
        <taxon>Lactobacillaceae</taxon>
        <taxon>Lacticaseibacillus</taxon>
    </lineage>
</organism>
<reference key="1">
    <citation type="submission" date="2008-06" db="EMBL/GenBank/DDBJ databases">
        <title>Lactobacillus casei BL23 complete genome sequence.</title>
        <authorList>
            <person name="Maze A."/>
            <person name="Boel G."/>
            <person name="Bourand A."/>
            <person name="Loux V."/>
            <person name="Gibrat J.F."/>
            <person name="Zuniga M."/>
            <person name="Hartke A."/>
            <person name="Deutscher J."/>
        </authorList>
    </citation>
    <scope>NUCLEOTIDE SEQUENCE [LARGE SCALE GENOMIC DNA]</scope>
    <source>
        <strain>BL23</strain>
    </source>
</reference>
<protein>
    <recommendedName>
        <fullName evidence="1">Holo-[acyl-carrier-protein] synthase</fullName>
        <shortName evidence="1">Holo-ACP synthase</shortName>
        <ecNumber evidence="1">2.7.8.7</ecNumber>
    </recommendedName>
    <alternativeName>
        <fullName evidence="1">4'-phosphopantetheinyl transferase AcpS</fullName>
    </alternativeName>
</protein>
<proteinExistence type="inferred from homology"/>
<evidence type="ECO:0000255" key="1">
    <source>
        <dbReference type="HAMAP-Rule" id="MF_00101"/>
    </source>
</evidence>
<gene>
    <name evidence="1" type="primary">acpS</name>
    <name type="ordered locus">LCABL_27290</name>
</gene>
<sequence>MIYGIGVDVTDLARIQAAQEKNSGFAVKILTPTELANYQQLDGRRAVEYLSGRFSAKESYSKAFGTGLGKVALQDVEILNNELGKPILTKHPFSGQAFVSISHSETLVFTEVILEKEGPERDDR</sequence>
<comment type="function">
    <text evidence="1">Transfers the 4'-phosphopantetheine moiety from coenzyme A to a Ser of acyl-carrier-protein.</text>
</comment>
<comment type="catalytic activity">
    <reaction evidence="1">
        <text>apo-[ACP] + CoA = holo-[ACP] + adenosine 3',5'-bisphosphate + H(+)</text>
        <dbReference type="Rhea" id="RHEA:12068"/>
        <dbReference type="Rhea" id="RHEA-COMP:9685"/>
        <dbReference type="Rhea" id="RHEA-COMP:9690"/>
        <dbReference type="ChEBI" id="CHEBI:15378"/>
        <dbReference type="ChEBI" id="CHEBI:29999"/>
        <dbReference type="ChEBI" id="CHEBI:57287"/>
        <dbReference type="ChEBI" id="CHEBI:58343"/>
        <dbReference type="ChEBI" id="CHEBI:64479"/>
        <dbReference type="EC" id="2.7.8.7"/>
    </reaction>
</comment>
<comment type="cofactor">
    <cofactor evidence="1">
        <name>Mg(2+)</name>
        <dbReference type="ChEBI" id="CHEBI:18420"/>
    </cofactor>
</comment>
<comment type="subcellular location">
    <subcellularLocation>
        <location evidence="1">Cytoplasm</location>
    </subcellularLocation>
</comment>
<comment type="similarity">
    <text evidence="1">Belongs to the P-Pant transferase superfamily. AcpS family.</text>
</comment>